<accession>P9WJ25</accession>
<accession>L0TCP6</accession>
<accession>O53218</accession>
<accession>Q7D718</accession>
<reference key="1">
    <citation type="journal article" date="1998" name="Nature">
        <title>Deciphering the biology of Mycobacterium tuberculosis from the complete genome sequence.</title>
        <authorList>
            <person name="Cole S.T."/>
            <person name="Brosch R."/>
            <person name="Parkhill J."/>
            <person name="Garnier T."/>
            <person name="Churcher C.M."/>
            <person name="Harris D.E."/>
            <person name="Gordon S.V."/>
            <person name="Eiglmeier K."/>
            <person name="Gas S."/>
            <person name="Barry C.E. III"/>
            <person name="Tekaia F."/>
            <person name="Badcock K."/>
            <person name="Basham D."/>
            <person name="Brown D."/>
            <person name="Chillingworth T."/>
            <person name="Connor R."/>
            <person name="Davies R.M."/>
            <person name="Devlin K."/>
            <person name="Feltwell T."/>
            <person name="Gentles S."/>
            <person name="Hamlin N."/>
            <person name="Holroyd S."/>
            <person name="Hornsby T."/>
            <person name="Jagels K."/>
            <person name="Krogh A."/>
            <person name="McLean J."/>
            <person name="Moule S."/>
            <person name="Murphy L.D."/>
            <person name="Oliver S."/>
            <person name="Osborne J."/>
            <person name="Quail M.A."/>
            <person name="Rajandream M.A."/>
            <person name="Rogers J."/>
            <person name="Rutter S."/>
            <person name="Seeger K."/>
            <person name="Skelton S."/>
            <person name="Squares S."/>
            <person name="Squares R."/>
            <person name="Sulston J.E."/>
            <person name="Taylor K."/>
            <person name="Whitehead S."/>
            <person name="Barrell B.G."/>
        </authorList>
    </citation>
    <scope>NUCLEOTIDE SEQUENCE [LARGE SCALE GENOMIC DNA]</scope>
    <source>
        <strain>ATCC 25618 / H37Rv</strain>
    </source>
</reference>
<reference key="2">
    <citation type="journal article" date="2009" name="PLoS Genet.">
        <title>Comprehensive functional analysis of Mycobacterium tuberculosis toxin-antitoxin systems: implications for pathogenesis, stress responses, and evolution.</title>
        <authorList>
            <person name="Ramage H.R."/>
            <person name="Connolly L.E."/>
            <person name="Cox J.S."/>
        </authorList>
    </citation>
    <scope>POSSIBLE FUNCTION</scope>
    <source>
        <strain>ATCC 35801 / TMC 107 / Erdman</strain>
    </source>
</reference>
<reference key="3">
    <citation type="journal article" date="2011" name="Mol. Cell. Proteomics">
        <title>Proteogenomic analysis of Mycobacterium tuberculosis by high resolution mass spectrometry.</title>
        <authorList>
            <person name="Kelkar D.S."/>
            <person name="Kumar D."/>
            <person name="Kumar P."/>
            <person name="Balakrishnan L."/>
            <person name="Muthusamy B."/>
            <person name="Yadav A.K."/>
            <person name="Shrivastava P."/>
            <person name="Marimuthu A."/>
            <person name="Anand S."/>
            <person name="Sundaram H."/>
            <person name="Kingsbury R."/>
            <person name="Harsha H.C."/>
            <person name="Nair B."/>
            <person name="Prasad T.S."/>
            <person name="Chauhan D.S."/>
            <person name="Katoch K."/>
            <person name="Katoch V.M."/>
            <person name="Kumar P."/>
            <person name="Chaerkady R."/>
            <person name="Ramachandran S."/>
            <person name="Dash D."/>
            <person name="Pandey A."/>
        </authorList>
    </citation>
    <scope>IDENTIFICATION BY MASS SPECTROMETRY [LARGE SCALE ANALYSIS]</scope>
    <source>
        <strain>ATCC 25618 / H37Rv</strain>
    </source>
</reference>
<feature type="chain" id="PRO_0000408080" description="Putative antitoxin VapB38">
    <location>
        <begin position="1"/>
        <end position="73"/>
    </location>
</feature>
<keyword id="KW-1185">Reference proteome</keyword>
<keyword id="KW-1277">Toxin-antitoxin system</keyword>
<dbReference type="EMBL" id="AL123456">
    <property type="protein sequence ID" value="CCP45287.1"/>
    <property type="molecule type" value="Genomic_DNA"/>
</dbReference>
<dbReference type="PIR" id="D70869">
    <property type="entry name" value="D70869"/>
</dbReference>
<dbReference type="RefSeq" id="NP_217009.1">
    <property type="nucleotide sequence ID" value="NC_000962.3"/>
</dbReference>
<dbReference type="RefSeq" id="WP_003412749.1">
    <property type="nucleotide sequence ID" value="NZ_NVQJ01000063.1"/>
</dbReference>
<dbReference type="SMR" id="P9WJ25"/>
<dbReference type="STRING" id="83332.Rv2493"/>
<dbReference type="PaxDb" id="83332-Rv2493"/>
<dbReference type="DNASU" id="887480"/>
<dbReference type="GeneID" id="887480"/>
<dbReference type="KEGG" id="mtu:Rv2493"/>
<dbReference type="KEGG" id="mtv:RVBD_2493"/>
<dbReference type="TubercuList" id="Rv2493"/>
<dbReference type="eggNOG" id="ENOG5033JQS">
    <property type="taxonomic scope" value="Bacteria"/>
</dbReference>
<dbReference type="InParanoid" id="P9WJ25"/>
<dbReference type="OrthoDB" id="9813767at2"/>
<dbReference type="PhylomeDB" id="P9WJ25"/>
<dbReference type="Proteomes" id="UP000001584">
    <property type="component" value="Chromosome"/>
</dbReference>
<evidence type="ECO:0000305" key="1">
    <source>
    </source>
</evidence>
<protein>
    <recommendedName>
        <fullName>Putative antitoxin VapB38</fullName>
    </recommendedName>
</protein>
<gene>
    <name type="primary">vapB38</name>
    <name type="ordered locus">Rv2493</name>
</gene>
<proteinExistence type="evidence at protein level"/>
<comment type="function">
    <text evidence="1">Probable antitoxin component of a type II toxin-antitoxin (TA) system. Its putative cognate toxin is VapC38.</text>
</comment>
<sequence length="73" mass="7897">MRTTLDLDDDVIAAARELASSQRRSLGSVISELARRGLMPGRVEADDGLPVIRVPAGTPPITPEMVRRALDED</sequence>
<organism>
    <name type="scientific">Mycobacterium tuberculosis (strain ATCC 25618 / H37Rv)</name>
    <dbReference type="NCBI Taxonomy" id="83332"/>
    <lineage>
        <taxon>Bacteria</taxon>
        <taxon>Bacillati</taxon>
        <taxon>Actinomycetota</taxon>
        <taxon>Actinomycetes</taxon>
        <taxon>Mycobacteriales</taxon>
        <taxon>Mycobacteriaceae</taxon>
        <taxon>Mycobacterium</taxon>
        <taxon>Mycobacterium tuberculosis complex</taxon>
    </lineage>
</organism>
<name>VPB38_MYCTU</name>